<gene>
    <name type="ORF">SELMODRAFT_416716</name>
</gene>
<accession>D8S067</accession>
<reference key="1">
    <citation type="journal article" date="2011" name="Science">
        <title>The Selaginella genome identifies genetic changes associated with the evolution of vascular plants.</title>
        <authorList>
            <person name="Banks J.A."/>
            <person name="Nishiyama T."/>
            <person name="Hasebe M."/>
            <person name="Bowman J.L."/>
            <person name="Gribskov M."/>
            <person name="dePamphilis C."/>
            <person name="Albert V.A."/>
            <person name="Aono N."/>
            <person name="Aoyama T."/>
            <person name="Ambrose B.A."/>
            <person name="Ashton N.W."/>
            <person name="Axtell M.J."/>
            <person name="Barker E."/>
            <person name="Barker M.S."/>
            <person name="Bennetzen J.L."/>
            <person name="Bonawitz N.D."/>
            <person name="Chapple C."/>
            <person name="Cheng C."/>
            <person name="Correa L.G."/>
            <person name="Dacre M."/>
            <person name="DeBarry J."/>
            <person name="Dreyer I."/>
            <person name="Elias M."/>
            <person name="Engstrom E.M."/>
            <person name="Estelle M."/>
            <person name="Feng L."/>
            <person name="Finet C."/>
            <person name="Floyd S.K."/>
            <person name="Frommer W.B."/>
            <person name="Fujita T."/>
            <person name="Gramzow L."/>
            <person name="Gutensohn M."/>
            <person name="Harholt J."/>
            <person name="Hattori M."/>
            <person name="Heyl A."/>
            <person name="Hirai T."/>
            <person name="Hiwatashi Y."/>
            <person name="Ishikawa M."/>
            <person name="Iwata M."/>
            <person name="Karol K.G."/>
            <person name="Koehler B."/>
            <person name="Kolukisaoglu U."/>
            <person name="Kubo M."/>
            <person name="Kurata T."/>
            <person name="Lalonde S."/>
            <person name="Li K."/>
            <person name="Li Y."/>
            <person name="Litt A."/>
            <person name="Lyons E."/>
            <person name="Manning G."/>
            <person name="Maruyama T."/>
            <person name="Michael T.P."/>
            <person name="Mikami K."/>
            <person name="Miyazaki S."/>
            <person name="Morinaga S."/>
            <person name="Murata T."/>
            <person name="Mueller-Roeber B."/>
            <person name="Nelson D.R."/>
            <person name="Obara M."/>
            <person name="Oguri Y."/>
            <person name="Olmstead R.G."/>
            <person name="Onodera N."/>
            <person name="Petersen B.L."/>
            <person name="Pils B."/>
            <person name="Prigge M."/>
            <person name="Rensing S.A."/>
            <person name="Riano-Pachon D.M."/>
            <person name="Roberts A.W."/>
            <person name="Sato Y."/>
            <person name="Scheller H.V."/>
            <person name="Schulz B."/>
            <person name="Schulz C."/>
            <person name="Shakirov E.V."/>
            <person name="Shibagaki N."/>
            <person name="Shinohara N."/>
            <person name="Shippen D.E."/>
            <person name="Soerensen I."/>
            <person name="Sotooka R."/>
            <person name="Sugimoto N."/>
            <person name="Sugita M."/>
            <person name="Sumikawa N."/>
            <person name="Tanurdzic M."/>
            <person name="Theissen G."/>
            <person name="Ulvskov P."/>
            <person name="Wakazuki S."/>
            <person name="Weng J.K."/>
            <person name="Willats W.W."/>
            <person name="Wipf D."/>
            <person name="Wolf P.G."/>
            <person name="Yang L."/>
            <person name="Zimmer A.D."/>
            <person name="Zhu Q."/>
            <person name="Mitros T."/>
            <person name="Hellsten U."/>
            <person name="Loque D."/>
            <person name="Otillar R."/>
            <person name="Salamov A."/>
            <person name="Schmutz J."/>
            <person name="Shapiro H."/>
            <person name="Lindquist E."/>
            <person name="Lucas S."/>
            <person name="Rokhsar D."/>
            <person name="Grigoriev I.V."/>
        </authorList>
    </citation>
    <scope>NUCLEOTIDE SEQUENCE [LARGE SCALE GENOMIC DNA]</scope>
</reference>
<sequence length="264" mass="29526">MISKAFFVRGDFQDCDTKGKERVVILLTVLCLLLGFLYAVIGYADFTVRHLSSTTLAFTNDLCAAYTSGSLVKTTWSGRAPFPTYMIALSTIIRSILFTMFGGVGMATLPLSLIFAFKNRPKCVTTRAQYVKVMALQEATDLAKRSNELKTATLGLQREERGGKKGRKFRKNVKKVQQADTSWALTVRNLALSIIWLLHIIVFMLVNPPAFPFLNQVFIQLDSAWGLLGTTTFAIFCYYLVMSVISGEMHLGMRLLLLSIHPMK</sequence>
<proteinExistence type="inferred from homology"/>
<name>LMBD2_SELML</name>
<organism>
    <name type="scientific">Selaginella moellendorffii</name>
    <name type="common">Spikemoss</name>
    <dbReference type="NCBI Taxonomy" id="88036"/>
    <lineage>
        <taxon>Eukaryota</taxon>
        <taxon>Viridiplantae</taxon>
        <taxon>Streptophyta</taxon>
        <taxon>Embryophyta</taxon>
        <taxon>Tracheophyta</taxon>
        <taxon>Lycopodiopsida</taxon>
        <taxon>Selaginellales</taxon>
        <taxon>Selaginellaceae</taxon>
        <taxon>Selaginella</taxon>
    </lineage>
</organism>
<protein>
    <recommendedName>
        <fullName>LIMR family protein SELMODRAFT_416716</fullName>
    </recommendedName>
</protein>
<dbReference type="EMBL" id="GL377596">
    <property type="protein sequence ID" value="EFJ22424.1"/>
    <property type="molecule type" value="Genomic_DNA"/>
</dbReference>
<dbReference type="RefSeq" id="XP_002976755.1">
    <property type="nucleotide sequence ID" value="XM_002976709.1"/>
</dbReference>
<dbReference type="STRING" id="88036.D8S067"/>
<dbReference type="EnsemblPlants" id="EFJ22424">
    <property type="protein sequence ID" value="EFJ22424"/>
    <property type="gene ID" value="SELMODRAFT_416716"/>
</dbReference>
<dbReference type="Gramene" id="EFJ22424">
    <property type="protein sequence ID" value="EFJ22424"/>
    <property type="gene ID" value="SELMODRAFT_416716"/>
</dbReference>
<dbReference type="KEGG" id="smo:SELMODRAFT_416716"/>
<dbReference type="eggNOG" id="ENOG502QPKQ">
    <property type="taxonomic scope" value="Eukaryota"/>
</dbReference>
<dbReference type="HOGENOM" id="CLU_026480_1_0_1"/>
<dbReference type="InParanoid" id="D8S067"/>
<dbReference type="Proteomes" id="UP000001514">
    <property type="component" value="Unassembled WGS sequence"/>
</dbReference>
<dbReference type="GO" id="GO:0016020">
    <property type="term" value="C:membrane"/>
    <property type="evidence" value="ECO:0007669"/>
    <property type="project" value="UniProtKB-SubCell"/>
</dbReference>
<dbReference type="InterPro" id="IPR006876">
    <property type="entry name" value="LMBR1-like_membr_prot"/>
</dbReference>
<dbReference type="PANTHER" id="PTHR31652">
    <property type="entry name" value="LIMR FAMILY PROTEIN DDB_G0283707-RELATED"/>
    <property type="match status" value="1"/>
</dbReference>
<dbReference type="PANTHER" id="PTHR31652:SF0">
    <property type="entry name" value="LIMR FAMILY PROTEIN DDB_G0283707-RELATED"/>
    <property type="match status" value="1"/>
</dbReference>
<dbReference type="Pfam" id="PF04791">
    <property type="entry name" value="LMBR1"/>
    <property type="match status" value="1"/>
</dbReference>
<comment type="subcellular location">
    <subcellularLocation>
        <location evidence="2">Membrane</location>
        <topology evidence="2">Multi-pass membrane protein</topology>
    </subcellularLocation>
</comment>
<comment type="similarity">
    <text evidence="2">Belongs to the LIMR family.</text>
</comment>
<keyword id="KW-0472">Membrane</keyword>
<keyword id="KW-1185">Reference proteome</keyword>
<keyword id="KW-0812">Transmembrane</keyword>
<keyword id="KW-1133">Transmembrane helix</keyword>
<feature type="chain" id="PRO_0000417755" description="LIMR family protein SELMODRAFT_416716">
    <location>
        <begin position="1"/>
        <end position="264"/>
    </location>
</feature>
<feature type="transmembrane region" description="Helical" evidence="1">
    <location>
        <begin position="23"/>
        <end position="43"/>
    </location>
</feature>
<feature type="transmembrane region" description="Helical" evidence="1">
    <location>
        <begin position="96"/>
        <end position="116"/>
    </location>
</feature>
<feature type="transmembrane region" description="Helical" evidence="1">
    <location>
        <begin position="194"/>
        <end position="214"/>
    </location>
</feature>
<feature type="transmembrane region" description="Helical" evidence="1">
    <location>
        <begin position="225"/>
        <end position="245"/>
    </location>
</feature>
<evidence type="ECO:0000255" key="1"/>
<evidence type="ECO:0000305" key="2"/>